<name>Y711_NITEU</name>
<evidence type="ECO:0000255" key="1">
    <source>
        <dbReference type="HAMAP-Rule" id="MF_00048"/>
    </source>
</evidence>
<gene>
    <name type="ordered locus">NE0711</name>
</gene>
<reference key="1">
    <citation type="journal article" date="2003" name="J. Bacteriol.">
        <title>Complete genome sequence of the ammonia-oxidizing bacterium and obligate chemolithoautotroph Nitrosomonas europaea.</title>
        <authorList>
            <person name="Chain P."/>
            <person name="Lamerdin J.E."/>
            <person name="Larimer F.W."/>
            <person name="Regala W."/>
            <person name="Lao V."/>
            <person name="Land M.L."/>
            <person name="Hauser L."/>
            <person name="Hooper A.B."/>
            <person name="Klotz M.G."/>
            <person name="Norton J."/>
            <person name="Sayavedra-Soto L.A."/>
            <person name="Arciero D.M."/>
            <person name="Hommes N.G."/>
            <person name="Whittaker M.M."/>
            <person name="Arp D.J."/>
        </authorList>
    </citation>
    <scope>NUCLEOTIDE SEQUENCE [LARGE SCALE GENOMIC DNA]</scope>
    <source>
        <strain>ATCC 19718 / CIP 103999 / KCTC 2705 / NBRC 14298</strain>
    </source>
</reference>
<organism>
    <name type="scientific">Nitrosomonas europaea (strain ATCC 19718 / CIP 103999 / KCTC 2705 / NBRC 14298)</name>
    <dbReference type="NCBI Taxonomy" id="228410"/>
    <lineage>
        <taxon>Bacteria</taxon>
        <taxon>Pseudomonadati</taxon>
        <taxon>Pseudomonadota</taxon>
        <taxon>Betaproteobacteria</taxon>
        <taxon>Nitrosomonadales</taxon>
        <taxon>Nitrosomonadaceae</taxon>
        <taxon>Nitrosomonas</taxon>
    </lineage>
</organism>
<accession>Q82WG7</accession>
<sequence length="118" mass="13345">MSSAGNKGSDAEQCATIFLQQQKLTLLERNYRCRFGEIDLIMREGDTVIFVEVRMRSSDRFGGAAASITAAKQLKLTRAARHYLAGCEGDFPYRFDAILISGERENEIEWIRNAFDES</sequence>
<keyword id="KW-1185">Reference proteome</keyword>
<proteinExistence type="inferred from homology"/>
<protein>
    <recommendedName>
        <fullName evidence="1">UPF0102 protein NE0711</fullName>
    </recommendedName>
</protein>
<comment type="similarity">
    <text evidence="1">Belongs to the UPF0102 family.</text>
</comment>
<feature type="chain" id="PRO_0000167367" description="UPF0102 protein NE0711">
    <location>
        <begin position="1"/>
        <end position="118"/>
    </location>
</feature>
<dbReference type="EMBL" id="AL954747">
    <property type="protein sequence ID" value="CAD84622.1"/>
    <property type="molecule type" value="Genomic_DNA"/>
</dbReference>
<dbReference type="RefSeq" id="WP_011111330.1">
    <property type="nucleotide sequence ID" value="NC_004757.1"/>
</dbReference>
<dbReference type="SMR" id="Q82WG7"/>
<dbReference type="STRING" id="228410.NE0711"/>
<dbReference type="GeneID" id="87103905"/>
<dbReference type="KEGG" id="neu:NE0711"/>
<dbReference type="eggNOG" id="COG0792">
    <property type="taxonomic scope" value="Bacteria"/>
</dbReference>
<dbReference type="HOGENOM" id="CLU_115353_1_0_4"/>
<dbReference type="OrthoDB" id="9794876at2"/>
<dbReference type="PhylomeDB" id="Q82WG7"/>
<dbReference type="Proteomes" id="UP000001416">
    <property type="component" value="Chromosome"/>
</dbReference>
<dbReference type="GO" id="GO:0003676">
    <property type="term" value="F:nucleic acid binding"/>
    <property type="evidence" value="ECO:0007669"/>
    <property type="project" value="InterPro"/>
</dbReference>
<dbReference type="CDD" id="cd20736">
    <property type="entry name" value="PoNe_Nuclease"/>
    <property type="match status" value="1"/>
</dbReference>
<dbReference type="Gene3D" id="3.40.1350.10">
    <property type="match status" value="1"/>
</dbReference>
<dbReference type="HAMAP" id="MF_00048">
    <property type="entry name" value="UPF0102"/>
    <property type="match status" value="1"/>
</dbReference>
<dbReference type="InterPro" id="IPR011335">
    <property type="entry name" value="Restrct_endonuc-II-like"/>
</dbReference>
<dbReference type="InterPro" id="IPR011856">
    <property type="entry name" value="tRNA_endonuc-like_dom_sf"/>
</dbReference>
<dbReference type="InterPro" id="IPR003509">
    <property type="entry name" value="UPF0102_YraN-like"/>
</dbReference>
<dbReference type="NCBIfam" id="NF009150">
    <property type="entry name" value="PRK12497.1-3"/>
    <property type="match status" value="1"/>
</dbReference>
<dbReference type="NCBIfam" id="TIGR00252">
    <property type="entry name" value="YraN family protein"/>
    <property type="match status" value="1"/>
</dbReference>
<dbReference type="PANTHER" id="PTHR34039">
    <property type="entry name" value="UPF0102 PROTEIN YRAN"/>
    <property type="match status" value="1"/>
</dbReference>
<dbReference type="PANTHER" id="PTHR34039:SF1">
    <property type="entry name" value="UPF0102 PROTEIN YRAN"/>
    <property type="match status" value="1"/>
</dbReference>
<dbReference type="Pfam" id="PF02021">
    <property type="entry name" value="UPF0102"/>
    <property type="match status" value="1"/>
</dbReference>
<dbReference type="SUPFAM" id="SSF52980">
    <property type="entry name" value="Restriction endonuclease-like"/>
    <property type="match status" value="1"/>
</dbReference>